<sequence>MNFYDFSAVKMNGETVSMSDYKGKVVIVVNTASKCGFTPQFEGLEKLYETYKDQGLEILGFPCNQFANQDAGENTEINEFCQLNYGVTFTMFQKIKVNGKEAHPLYQFLKKEAKGALSGTIKWNFTKFLIDRDGQVIERFAPKTEPEEMEEEIKKLL</sequence>
<keyword id="KW-0560">Oxidoreductase</keyword>
<keyword id="KW-0575">Peroxidase</keyword>
<gene>
    <name type="primary">gpo</name>
    <name type="ordered locus">llmg_1088</name>
</gene>
<dbReference type="EC" id="1.11.1.9"/>
<dbReference type="EMBL" id="AJ000109">
    <property type="protein sequence ID" value="CAA03927.1"/>
    <property type="molecule type" value="Genomic_DNA"/>
</dbReference>
<dbReference type="EMBL" id="AM406671">
    <property type="protein sequence ID" value="CAL97682.1"/>
    <property type="molecule type" value="Genomic_DNA"/>
</dbReference>
<dbReference type="RefSeq" id="WP_011834996.1">
    <property type="nucleotide sequence ID" value="NC_009004.1"/>
</dbReference>
<dbReference type="SMR" id="O32770"/>
<dbReference type="STRING" id="416870.llmg_1088"/>
<dbReference type="PeroxiBase" id="3754">
    <property type="entry name" value="LlcGPx01_MG1363"/>
</dbReference>
<dbReference type="GeneID" id="61109649"/>
<dbReference type="KEGG" id="llm:llmg_1088"/>
<dbReference type="eggNOG" id="COG0386">
    <property type="taxonomic scope" value="Bacteria"/>
</dbReference>
<dbReference type="HOGENOM" id="CLU_029507_4_0_9"/>
<dbReference type="OrthoDB" id="9789406at2"/>
<dbReference type="PhylomeDB" id="O32770"/>
<dbReference type="Proteomes" id="UP000000364">
    <property type="component" value="Chromosome"/>
</dbReference>
<dbReference type="GO" id="GO:0004602">
    <property type="term" value="F:glutathione peroxidase activity"/>
    <property type="evidence" value="ECO:0007669"/>
    <property type="project" value="UniProtKB-EC"/>
</dbReference>
<dbReference type="GO" id="GO:0034599">
    <property type="term" value="P:cellular response to oxidative stress"/>
    <property type="evidence" value="ECO:0007669"/>
    <property type="project" value="TreeGrafter"/>
</dbReference>
<dbReference type="CDD" id="cd00340">
    <property type="entry name" value="GSH_Peroxidase"/>
    <property type="match status" value="1"/>
</dbReference>
<dbReference type="FunFam" id="3.40.30.10:FF:000010">
    <property type="entry name" value="Glutathione peroxidase"/>
    <property type="match status" value="1"/>
</dbReference>
<dbReference type="Gene3D" id="3.40.30.10">
    <property type="entry name" value="Glutaredoxin"/>
    <property type="match status" value="1"/>
</dbReference>
<dbReference type="InterPro" id="IPR000889">
    <property type="entry name" value="Glutathione_peroxidase"/>
</dbReference>
<dbReference type="InterPro" id="IPR029759">
    <property type="entry name" value="GPX_AS"/>
</dbReference>
<dbReference type="InterPro" id="IPR029760">
    <property type="entry name" value="GPX_CS"/>
</dbReference>
<dbReference type="InterPro" id="IPR036249">
    <property type="entry name" value="Thioredoxin-like_sf"/>
</dbReference>
<dbReference type="InterPro" id="IPR013766">
    <property type="entry name" value="Thioredoxin_domain"/>
</dbReference>
<dbReference type="PANTHER" id="PTHR11592">
    <property type="entry name" value="GLUTATHIONE PEROXIDASE"/>
    <property type="match status" value="1"/>
</dbReference>
<dbReference type="PANTHER" id="PTHR11592:SF78">
    <property type="entry name" value="GLUTATHIONE PEROXIDASE"/>
    <property type="match status" value="1"/>
</dbReference>
<dbReference type="Pfam" id="PF00255">
    <property type="entry name" value="GSHPx"/>
    <property type="match status" value="1"/>
</dbReference>
<dbReference type="PIRSF" id="PIRSF000303">
    <property type="entry name" value="Glutathion_perox"/>
    <property type="match status" value="1"/>
</dbReference>
<dbReference type="PRINTS" id="PR01011">
    <property type="entry name" value="GLUTPROXDASE"/>
</dbReference>
<dbReference type="SUPFAM" id="SSF52833">
    <property type="entry name" value="Thioredoxin-like"/>
    <property type="match status" value="1"/>
</dbReference>
<dbReference type="PROSITE" id="PS00460">
    <property type="entry name" value="GLUTATHIONE_PEROXID_1"/>
    <property type="match status" value="1"/>
</dbReference>
<dbReference type="PROSITE" id="PS00763">
    <property type="entry name" value="GLUTATHIONE_PEROXID_2"/>
    <property type="match status" value="1"/>
</dbReference>
<dbReference type="PROSITE" id="PS51355">
    <property type="entry name" value="GLUTATHIONE_PEROXID_3"/>
    <property type="match status" value="1"/>
</dbReference>
<protein>
    <recommendedName>
        <fullName>Glutathione peroxidase</fullName>
        <ecNumber>1.11.1.9</ecNumber>
    </recommendedName>
</protein>
<feature type="chain" id="PRO_0000066662" description="Glutathione peroxidase">
    <location>
        <begin position="1"/>
        <end position="157"/>
    </location>
</feature>
<feature type="active site" evidence="1">
    <location>
        <position position="35"/>
    </location>
</feature>
<name>GPO_LACLM</name>
<proteinExistence type="inferred from homology"/>
<organism>
    <name type="scientific">Lactococcus lactis subsp. cremoris (strain MG1363)</name>
    <dbReference type="NCBI Taxonomy" id="416870"/>
    <lineage>
        <taxon>Bacteria</taxon>
        <taxon>Bacillati</taxon>
        <taxon>Bacillota</taxon>
        <taxon>Bacilli</taxon>
        <taxon>Lactobacillales</taxon>
        <taxon>Streptococcaceae</taxon>
        <taxon>Lactococcus</taxon>
        <taxon>Lactococcus cremoris subsp. cremoris</taxon>
    </lineage>
</organism>
<reference key="1">
    <citation type="journal article" date="1998" name="J. Bacteriol.">
        <title>The carB gene encoding the large subunit of carbamoylphosphate synthetase from Lactococcus lactis is transcribed monocistronically.</title>
        <authorList>
            <person name="Martinussen J."/>
            <person name="Hammer K."/>
        </authorList>
    </citation>
    <scope>NUCLEOTIDE SEQUENCE [GENOMIC DNA]</scope>
</reference>
<reference key="2">
    <citation type="journal article" date="2007" name="J. Bacteriol.">
        <title>The complete genome sequence of the lactic acid bacterial paradigm Lactococcus lactis subsp. cremoris MG1363.</title>
        <authorList>
            <person name="Wegmann U."/>
            <person name="O'Connell-Motherway M."/>
            <person name="Zomer A."/>
            <person name="Buist G."/>
            <person name="Shearman C."/>
            <person name="Canchaya C."/>
            <person name="Ventura M."/>
            <person name="Goesmann A."/>
            <person name="Gasson M.J."/>
            <person name="Kuipers O.P."/>
            <person name="van Sinderen D."/>
            <person name="Kok J."/>
        </authorList>
    </citation>
    <scope>NUCLEOTIDE SEQUENCE [LARGE SCALE GENOMIC DNA]</scope>
    <source>
        <strain>MG1363</strain>
    </source>
</reference>
<evidence type="ECO:0000250" key="1"/>
<evidence type="ECO:0000305" key="2"/>
<comment type="catalytic activity">
    <reaction>
        <text>2 glutathione + H2O2 = glutathione disulfide + 2 H2O</text>
        <dbReference type="Rhea" id="RHEA:16833"/>
        <dbReference type="ChEBI" id="CHEBI:15377"/>
        <dbReference type="ChEBI" id="CHEBI:16240"/>
        <dbReference type="ChEBI" id="CHEBI:57925"/>
        <dbReference type="ChEBI" id="CHEBI:58297"/>
        <dbReference type="EC" id="1.11.1.9"/>
    </reaction>
</comment>
<comment type="similarity">
    <text evidence="2">Belongs to the glutathione peroxidase family.</text>
</comment>
<accession>O32770</accession>
<accession>A2RK72</accession>